<dbReference type="EC" id="3.1.1.24"/>
<dbReference type="EMBL" id="AF009224">
    <property type="protein sequence ID" value="AAC46435.1"/>
    <property type="molecule type" value="Genomic_DNA"/>
</dbReference>
<dbReference type="EMBL" id="CR543861">
    <property type="protein sequence ID" value="CAG68314.1"/>
    <property type="molecule type" value="Genomic_DNA"/>
</dbReference>
<dbReference type="SMR" id="P00632"/>
<dbReference type="STRING" id="202950.GCA_001485005_02110"/>
<dbReference type="ESTHER" id="acica-elh2">
    <property type="family name" value="Carboxymethylbutenolide_lactonase"/>
</dbReference>
<dbReference type="GeneID" id="45233863"/>
<dbReference type="KEGG" id="aci:ACIAD1451"/>
<dbReference type="eggNOG" id="COG2021">
    <property type="taxonomic scope" value="Bacteria"/>
</dbReference>
<dbReference type="HOGENOM" id="CLU_020336_50_3_6"/>
<dbReference type="OrthoDB" id="9793083at2"/>
<dbReference type="BioCyc" id="ASP62977:ACIAD_RS06705-MONOMER"/>
<dbReference type="UniPathway" id="UPA00157">
    <property type="reaction ID" value="UER00261"/>
</dbReference>
<dbReference type="Proteomes" id="UP000000430">
    <property type="component" value="Chromosome"/>
</dbReference>
<dbReference type="GO" id="GO:0047570">
    <property type="term" value="F:3-oxoadipate enol-lactonase activity"/>
    <property type="evidence" value="ECO:0007669"/>
    <property type="project" value="UniProtKB-EC"/>
</dbReference>
<dbReference type="GO" id="GO:0042952">
    <property type="term" value="P:beta-ketoadipate pathway"/>
    <property type="evidence" value="ECO:0007669"/>
    <property type="project" value="UniProtKB-UniPathway"/>
</dbReference>
<dbReference type="Gene3D" id="3.40.50.1820">
    <property type="entry name" value="alpha/beta hydrolase"/>
    <property type="match status" value="1"/>
</dbReference>
<dbReference type="InterPro" id="IPR050471">
    <property type="entry name" value="AB_hydrolase"/>
</dbReference>
<dbReference type="InterPro" id="IPR000073">
    <property type="entry name" value="AB_hydrolase_1"/>
</dbReference>
<dbReference type="InterPro" id="IPR029058">
    <property type="entry name" value="AB_hydrolase_fold"/>
</dbReference>
<dbReference type="InterPro" id="IPR026968">
    <property type="entry name" value="PcaD/CatD"/>
</dbReference>
<dbReference type="NCBIfam" id="TIGR02427">
    <property type="entry name" value="protocat_pcaD"/>
    <property type="match status" value="1"/>
</dbReference>
<dbReference type="PANTHER" id="PTHR43433:SF1">
    <property type="entry name" value="BLL5160 PROTEIN"/>
    <property type="match status" value="1"/>
</dbReference>
<dbReference type="PANTHER" id="PTHR43433">
    <property type="entry name" value="HYDROLASE, ALPHA/BETA FOLD FAMILY PROTEIN"/>
    <property type="match status" value="1"/>
</dbReference>
<dbReference type="Pfam" id="PF00561">
    <property type="entry name" value="Abhydrolase_1"/>
    <property type="match status" value="1"/>
</dbReference>
<dbReference type="PRINTS" id="PR00111">
    <property type="entry name" value="ABHYDROLASE"/>
</dbReference>
<dbReference type="SUPFAM" id="SSF53474">
    <property type="entry name" value="alpha/beta-Hydrolases"/>
    <property type="match status" value="1"/>
</dbReference>
<accession>P00632</accession>
<accession>Q43936</accession>
<reference key="1">
    <citation type="journal article" date="1994" name="Gene">
        <title>Unusual G + C content and codon usage in catIJF, a segment of the ben-cat supra-operonic cluster in the Acinetobacter calcoaceticus chromosome.</title>
        <authorList>
            <person name="Shanley M.S."/>
            <person name="Harrison A."/>
            <person name="Parales R.E."/>
            <person name="Kowalchuk G."/>
            <person name="Mitchell D.J."/>
            <person name="Ornston L.N."/>
        </authorList>
    </citation>
    <scope>NUCLEOTIDE SEQUENCE [GENOMIC DNA]</scope>
</reference>
<reference key="2">
    <citation type="journal article" date="2004" name="Nucleic Acids Res.">
        <title>Unique features revealed by the genome sequence of Acinetobacter sp. ADP1, a versatile and naturally transformation competent bacterium.</title>
        <authorList>
            <person name="Barbe V."/>
            <person name="Vallenet D."/>
            <person name="Fonknechten N."/>
            <person name="Kreimeyer A."/>
            <person name="Oztas S."/>
            <person name="Labarre L."/>
            <person name="Cruveiller S."/>
            <person name="Robert C."/>
            <person name="Duprat S."/>
            <person name="Wincker P."/>
            <person name="Ornston L.N."/>
            <person name="Weissenbach J."/>
            <person name="Marliere P."/>
            <person name="Cohen G.N."/>
            <person name="Medigue C."/>
        </authorList>
    </citation>
    <scope>NUCLEOTIDE SEQUENCE [LARGE SCALE GENOMIC DNA]</scope>
    <source>
        <strain>ATCC 33305 / BD413 / ADP1</strain>
    </source>
</reference>
<reference key="3">
    <citation type="journal article" date="1978" name="J. Biol. Chem.">
        <title>Homologous amino acid sequences in enzymes mediating sequential metabolic reactions.</title>
        <authorList>
            <person name="Yeh W.K."/>
            <person name="Davis G."/>
            <person name="Fletcher P."/>
            <person name="Ornston L.N."/>
        </authorList>
    </citation>
    <scope>PROTEIN SEQUENCE OF 2-30</scope>
</reference>
<sequence>MPVFHFKDTLTAQDVALNYATFGQADRPALIFSNSLGTNLSMWQQQIAYFQDKYFVICYDTRGHGASSTPVGPYRIDQLGTDVIALLDHLQIPQATFCGISMGGLTGQWLAIHFPERFNQVIVANTAAKIGEAQAWQARAQLVREQGLTPIAQTAATRWFTPGFIEDSPEIVEKLSHDLAQGSAEGYASCCEALAEADVRPQLQRISIPVLVIAGAQDPVTTVADGQFLCEHIVHSTLEVLEASHISNVEQPQAFNHAVEAVMKRFN</sequence>
<evidence type="ECO:0000269" key="1">
    <source>
    </source>
</evidence>
<evidence type="ECO:0000305" key="2"/>
<feature type="initiator methionine" description="Removed" evidence="1">
    <location>
        <position position="1"/>
    </location>
</feature>
<feature type="chain" id="PRO_0000086956" description="3-oxoadipate enol-lactonase 2">
    <location>
        <begin position="2"/>
        <end position="267"/>
    </location>
</feature>
<feature type="sequence conflict" description="In Ref. 3; AA sequence." evidence="2" ref="3">
    <original>N</original>
    <variation>D</variation>
    <location>
        <position position="18"/>
    </location>
</feature>
<name>ELH2_ACIAD</name>
<organism>
    <name type="scientific">Acinetobacter baylyi (strain ATCC 33305 / BD413 / ADP1)</name>
    <dbReference type="NCBI Taxonomy" id="62977"/>
    <lineage>
        <taxon>Bacteria</taxon>
        <taxon>Pseudomonadati</taxon>
        <taxon>Pseudomonadota</taxon>
        <taxon>Gammaproteobacteria</taxon>
        <taxon>Moraxellales</taxon>
        <taxon>Moraxellaceae</taxon>
        <taxon>Acinetobacter</taxon>
    </lineage>
</organism>
<proteinExistence type="evidence at protein level"/>
<protein>
    <recommendedName>
        <fullName>3-oxoadipate enol-lactonase 2</fullName>
        <ecNumber>3.1.1.24</ecNumber>
    </recommendedName>
    <alternativeName>
        <fullName>3-oxoadipate enol-lactonase II</fullName>
    </alternativeName>
    <alternativeName>
        <fullName>Beta-ketoadipate enol-lactone hydrolase II</fullName>
    </alternativeName>
    <alternativeName>
        <fullName>Enol-lactone hydrolase II</fullName>
    </alternativeName>
</protein>
<comment type="catalytic activity">
    <reaction>
        <text>(4,5-dihydro-5-oxofuran-2-yl)-acetate + H2O = 3-oxoadipate + H(+)</text>
        <dbReference type="Rhea" id="RHEA:10184"/>
        <dbReference type="ChEBI" id="CHEBI:15377"/>
        <dbReference type="ChEBI" id="CHEBI:15378"/>
        <dbReference type="ChEBI" id="CHEBI:15775"/>
        <dbReference type="ChEBI" id="CHEBI:58425"/>
        <dbReference type="EC" id="3.1.1.24"/>
    </reaction>
</comment>
<comment type="pathway">
    <text>Aromatic compound metabolism; beta-ketoadipate pathway; 3-oxoadipate from 5-oxo-4,5-dihydro-2-furylacetate: step 1/1.</text>
</comment>
<comment type="miscellaneous">
    <text>This species can form two 3-oxoadipate enol-lactonases in response to different inducers. The one shown is called enol-lactone hydrolase II by the authors.</text>
</comment>
<keyword id="KW-0058">Aromatic hydrocarbons catabolism</keyword>
<keyword id="KW-0903">Direct protein sequencing</keyword>
<keyword id="KW-0378">Hydrolase</keyword>
<gene>
    <name type="primary">catD</name>
    <name type="ordered locus">ACIAD1451</name>
</gene>